<keyword id="KW-0687">Ribonucleoprotein</keyword>
<keyword id="KW-0689">Ribosomal protein</keyword>
<comment type="similarity">
    <text evidence="1">Belongs to the bacterial ribosomal protein bL27 family.</text>
</comment>
<sequence length="90" mass="9685">MASKKAGGSTRNGRDSEAKRLGVKAYGNELIPAGSIIVRQRGTKFHAGDNVGMGKDHTLFAKVDGYVEFKTKGALNRKTVSIRPYTGSEE</sequence>
<gene>
    <name evidence="1" type="primary">rpmA</name>
    <name type="ordered locus">NMCC_1819</name>
</gene>
<evidence type="ECO:0000255" key="1">
    <source>
        <dbReference type="HAMAP-Rule" id="MF_00539"/>
    </source>
</evidence>
<evidence type="ECO:0000256" key="2">
    <source>
        <dbReference type="SAM" id="MobiDB-lite"/>
    </source>
</evidence>
<evidence type="ECO:0000305" key="3"/>
<name>RL27_NEIM0</name>
<reference key="1">
    <citation type="journal article" date="2008" name="Genomics">
        <title>Characterization of ST-4821 complex, a unique Neisseria meningitidis clone.</title>
        <authorList>
            <person name="Peng J."/>
            <person name="Yang L."/>
            <person name="Yang F."/>
            <person name="Yang J."/>
            <person name="Yan Y."/>
            <person name="Nie H."/>
            <person name="Zhang X."/>
            <person name="Xiong Z."/>
            <person name="Jiang Y."/>
            <person name="Cheng F."/>
            <person name="Xu X."/>
            <person name="Chen S."/>
            <person name="Sun L."/>
            <person name="Li W."/>
            <person name="Shen Y."/>
            <person name="Shao Z."/>
            <person name="Liang X."/>
            <person name="Xu J."/>
            <person name="Jin Q."/>
        </authorList>
    </citation>
    <scope>NUCLEOTIDE SEQUENCE [LARGE SCALE GENOMIC DNA]</scope>
    <source>
        <strain>053442</strain>
    </source>
</reference>
<organism>
    <name type="scientific">Neisseria meningitidis serogroup C (strain 053442)</name>
    <dbReference type="NCBI Taxonomy" id="374833"/>
    <lineage>
        <taxon>Bacteria</taxon>
        <taxon>Pseudomonadati</taxon>
        <taxon>Pseudomonadota</taxon>
        <taxon>Betaproteobacteria</taxon>
        <taxon>Neisseriales</taxon>
        <taxon>Neisseriaceae</taxon>
        <taxon>Neisseria</taxon>
    </lineage>
</organism>
<proteinExistence type="inferred from homology"/>
<feature type="chain" id="PRO_1000081899" description="Large ribosomal subunit protein bL27">
    <location>
        <begin position="1"/>
        <end position="90"/>
    </location>
</feature>
<feature type="region of interest" description="Disordered" evidence="2">
    <location>
        <begin position="1"/>
        <end position="21"/>
    </location>
</feature>
<dbReference type="EMBL" id="CP000381">
    <property type="protein sequence ID" value="ABX73958.1"/>
    <property type="molecule type" value="Genomic_DNA"/>
</dbReference>
<dbReference type="RefSeq" id="WP_002212328.1">
    <property type="nucleotide sequence ID" value="NC_010120.1"/>
</dbReference>
<dbReference type="SMR" id="A9M2Z6"/>
<dbReference type="GeneID" id="93387415"/>
<dbReference type="KEGG" id="nmn:NMCC_1819"/>
<dbReference type="HOGENOM" id="CLU_095424_4_1_4"/>
<dbReference type="Proteomes" id="UP000001177">
    <property type="component" value="Chromosome"/>
</dbReference>
<dbReference type="GO" id="GO:0022625">
    <property type="term" value="C:cytosolic large ribosomal subunit"/>
    <property type="evidence" value="ECO:0007669"/>
    <property type="project" value="TreeGrafter"/>
</dbReference>
<dbReference type="GO" id="GO:0003735">
    <property type="term" value="F:structural constituent of ribosome"/>
    <property type="evidence" value="ECO:0007669"/>
    <property type="project" value="InterPro"/>
</dbReference>
<dbReference type="GO" id="GO:0006412">
    <property type="term" value="P:translation"/>
    <property type="evidence" value="ECO:0007669"/>
    <property type="project" value="UniProtKB-UniRule"/>
</dbReference>
<dbReference type="FunFam" id="2.40.50.100:FF:000001">
    <property type="entry name" value="50S ribosomal protein L27"/>
    <property type="match status" value="1"/>
</dbReference>
<dbReference type="Gene3D" id="2.40.50.100">
    <property type="match status" value="1"/>
</dbReference>
<dbReference type="HAMAP" id="MF_00539">
    <property type="entry name" value="Ribosomal_bL27"/>
    <property type="match status" value="1"/>
</dbReference>
<dbReference type="InterPro" id="IPR001684">
    <property type="entry name" value="Ribosomal_bL27"/>
</dbReference>
<dbReference type="InterPro" id="IPR018261">
    <property type="entry name" value="Ribosomal_bL27_CS"/>
</dbReference>
<dbReference type="NCBIfam" id="TIGR00062">
    <property type="entry name" value="L27"/>
    <property type="match status" value="1"/>
</dbReference>
<dbReference type="PANTHER" id="PTHR15893:SF0">
    <property type="entry name" value="LARGE RIBOSOMAL SUBUNIT PROTEIN BL27M"/>
    <property type="match status" value="1"/>
</dbReference>
<dbReference type="PANTHER" id="PTHR15893">
    <property type="entry name" value="RIBOSOMAL PROTEIN L27"/>
    <property type="match status" value="1"/>
</dbReference>
<dbReference type="Pfam" id="PF01016">
    <property type="entry name" value="Ribosomal_L27"/>
    <property type="match status" value="1"/>
</dbReference>
<dbReference type="PRINTS" id="PR00063">
    <property type="entry name" value="RIBOSOMALL27"/>
</dbReference>
<dbReference type="SUPFAM" id="SSF110324">
    <property type="entry name" value="Ribosomal L27 protein-like"/>
    <property type="match status" value="1"/>
</dbReference>
<dbReference type="PROSITE" id="PS00831">
    <property type="entry name" value="RIBOSOMAL_L27"/>
    <property type="match status" value="1"/>
</dbReference>
<accession>A9M2Z6</accession>
<protein>
    <recommendedName>
        <fullName evidence="1">Large ribosomal subunit protein bL27</fullName>
    </recommendedName>
    <alternativeName>
        <fullName evidence="3">50S ribosomal protein L27</fullName>
    </alternativeName>
</protein>